<feature type="chain" id="PRO_0000265722" description="Elongation factor 4">
    <location>
        <begin position="1"/>
        <end position="601"/>
    </location>
</feature>
<feature type="domain" description="tr-type G">
    <location>
        <begin position="6"/>
        <end position="188"/>
    </location>
</feature>
<feature type="binding site" evidence="1">
    <location>
        <begin position="18"/>
        <end position="23"/>
    </location>
    <ligand>
        <name>GTP</name>
        <dbReference type="ChEBI" id="CHEBI:37565"/>
    </ligand>
</feature>
<feature type="binding site" evidence="1">
    <location>
        <begin position="135"/>
        <end position="138"/>
    </location>
    <ligand>
        <name>GTP</name>
        <dbReference type="ChEBI" id="CHEBI:37565"/>
    </ligand>
</feature>
<gene>
    <name evidence="1" type="primary">lepA</name>
    <name type="ordered locus">Tcr_0732</name>
</gene>
<protein>
    <recommendedName>
        <fullName evidence="1">Elongation factor 4</fullName>
        <shortName evidence="1">EF-4</shortName>
        <ecNumber evidence="1">3.6.5.n1</ecNumber>
    </recommendedName>
    <alternativeName>
        <fullName evidence="1">Ribosomal back-translocase LepA</fullName>
    </alternativeName>
</protein>
<name>LEPA_HYDCU</name>
<sequence length="601" mass="66480">MSNQLEHIRNFSIIAHIDHGKSTIADRFIHLCGGLTDREMAAQVLDSMDLERERGITIKAQSVTLNYLSDDGQTYQLNFIDTPGHVDFSYEVSRSLAACEGALLVVDASQGVEAQTVANCYTAIEQGLEVLPVLNKIDLPAADPERVVDEIEEIIGIEAHDAVHASAKSGVGIKETLEEIVRKIPAPEGDLDAPLKALIIDSWFDNYLGVVSLVRVIDGKISKKIKMKIMSTKEEYVVDEVGIFTPKRTPRDSLSAGEVGYVIAGIKDIDGAPVGDTITISGNESAPLPGFKPVQPRVFAGLFPISSEDFEDLREALRKLRLNDAALHFEPESSDALGFGFRCGFLGMLHMEIIQERLEREYNLDLITTAPTVIYEVLTKKGDLLSIDNPSSLPDPSLIEEIREPIIQANILVPNEYVGAVMKLCLEKRGVQKDMQYVGNQVSIHYEMPLNEVVLDFFDRLKSTSRGYASMEYDFKRFQADDLVKLEFLVNSEPVDALAIIVHKATAVQRGKALIEKLRKIIPRQMFDVAIQAAIGAKIIGRTNVKALRKNVTAKCYGGDVSRKKKLLQKQKEGKKRMKSIGSVELPQEAFLAVLSTSEED</sequence>
<evidence type="ECO:0000255" key="1">
    <source>
        <dbReference type="HAMAP-Rule" id="MF_00071"/>
    </source>
</evidence>
<accession>Q31HP5</accession>
<organism>
    <name type="scientific">Hydrogenovibrio crunogenus (strain DSM 25203 / XCL-2)</name>
    <name type="common">Thiomicrospira crunogena</name>
    <dbReference type="NCBI Taxonomy" id="317025"/>
    <lineage>
        <taxon>Bacteria</taxon>
        <taxon>Pseudomonadati</taxon>
        <taxon>Pseudomonadota</taxon>
        <taxon>Gammaproteobacteria</taxon>
        <taxon>Thiotrichales</taxon>
        <taxon>Piscirickettsiaceae</taxon>
        <taxon>Hydrogenovibrio</taxon>
    </lineage>
</organism>
<comment type="function">
    <text evidence="1">Required for accurate and efficient protein synthesis under certain stress conditions. May act as a fidelity factor of the translation reaction, by catalyzing a one-codon backward translocation of tRNAs on improperly translocated ribosomes. Back-translocation proceeds from a post-translocation (POST) complex to a pre-translocation (PRE) complex, thus giving elongation factor G a second chance to translocate the tRNAs correctly. Binds to ribosomes in a GTP-dependent manner.</text>
</comment>
<comment type="catalytic activity">
    <reaction evidence="1">
        <text>GTP + H2O = GDP + phosphate + H(+)</text>
        <dbReference type="Rhea" id="RHEA:19669"/>
        <dbReference type="ChEBI" id="CHEBI:15377"/>
        <dbReference type="ChEBI" id="CHEBI:15378"/>
        <dbReference type="ChEBI" id="CHEBI:37565"/>
        <dbReference type="ChEBI" id="CHEBI:43474"/>
        <dbReference type="ChEBI" id="CHEBI:58189"/>
        <dbReference type="EC" id="3.6.5.n1"/>
    </reaction>
</comment>
<comment type="subcellular location">
    <subcellularLocation>
        <location evidence="1">Cell inner membrane</location>
        <topology evidence="1">Peripheral membrane protein</topology>
        <orientation evidence="1">Cytoplasmic side</orientation>
    </subcellularLocation>
</comment>
<comment type="similarity">
    <text evidence="1">Belongs to the TRAFAC class translation factor GTPase superfamily. Classic translation factor GTPase family. LepA subfamily.</text>
</comment>
<reference key="1">
    <citation type="journal article" date="2006" name="PLoS Biol.">
        <title>The genome of deep-sea vent chemolithoautotroph Thiomicrospira crunogena XCL-2.</title>
        <authorList>
            <person name="Scott K.M."/>
            <person name="Sievert S.M."/>
            <person name="Abril F.N."/>
            <person name="Ball L.A."/>
            <person name="Barrett C.J."/>
            <person name="Blake R.A."/>
            <person name="Boller A.J."/>
            <person name="Chain P.S.G."/>
            <person name="Clark J.A."/>
            <person name="Davis C.R."/>
            <person name="Detter C."/>
            <person name="Do K.F."/>
            <person name="Dobrinski K.P."/>
            <person name="Faza B.I."/>
            <person name="Fitzpatrick K.A."/>
            <person name="Freyermuth S.K."/>
            <person name="Harmer T.L."/>
            <person name="Hauser L.J."/>
            <person name="Huegler M."/>
            <person name="Kerfeld C.A."/>
            <person name="Klotz M.G."/>
            <person name="Kong W.W."/>
            <person name="Land M."/>
            <person name="Lapidus A."/>
            <person name="Larimer F.W."/>
            <person name="Longo D.L."/>
            <person name="Lucas S."/>
            <person name="Malfatti S.A."/>
            <person name="Massey S.E."/>
            <person name="Martin D.D."/>
            <person name="McCuddin Z."/>
            <person name="Meyer F."/>
            <person name="Moore J.L."/>
            <person name="Ocampo L.H. Jr."/>
            <person name="Paul J.H."/>
            <person name="Paulsen I.T."/>
            <person name="Reep D.K."/>
            <person name="Ren Q."/>
            <person name="Ross R.L."/>
            <person name="Sato P.Y."/>
            <person name="Thomas P."/>
            <person name="Tinkham L.E."/>
            <person name="Zeruth G.T."/>
        </authorList>
    </citation>
    <scope>NUCLEOTIDE SEQUENCE [LARGE SCALE GENOMIC DNA]</scope>
    <source>
        <strain>DSM 25203 / XCL-2</strain>
    </source>
</reference>
<keyword id="KW-0997">Cell inner membrane</keyword>
<keyword id="KW-1003">Cell membrane</keyword>
<keyword id="KW-0342">GTP-binding</keyword>
<keyword id="KW-0378">Hydrolase</keyword>
<keyword id="KW-0472">Membrane</keyword>
<keyword id="KW-0547">Nucleotide-binding</keyword>
<keyword id="KW-0648">Protein biosynthesis</keyword>
<dbReference type="EC" id="3.6.5.n1" evidence="1"/>
<dbReference type="EMBL" id="CP000109">
    <property type="protein sequence ID" value="ABB41328.1"/>
    <property type="molecule type" value="Genomic_DNA"/>
</dbReference>
<dbReference type="SMR" id="Q31HP5"/>
<dbReference type="STRING" id="317025.Tcr_0732"/>
<dbReference type="KEGG" id="tcx:Tcr_0732"/>
<dbReference type="eggNOG" id="COG0481">
    <property type="taxonomic scope" value="Bacteria"/>
</dbReference>
<dbReference type="HOGENOM" id="CLU_009995_3_3_6"/>
<dbReference type="OrthoDB" id="5619066at2"/>
<dbReference type="GO" id="GO:0005886">
    <property type="term" value="C:plasma membrane"/>
    <property type="evidence" value="ECO:0007669"/>
    <property type="project" value="UniProtKB-SubCell"/>
</dbReference>
<dbReference type="GO" id="GO:0005525">
    <property type="term" value="F:GTP binding"/>
    <property type="evidence" value="ECO:0007669"/>
    <property type="project" value="UniProtKB-UniRule"/>
</dbReference>
<dbReference type="GO" id="GO:0003924">
    <property type="term" value="F:GTPase activity"/>
    <property type="evidence" value="ECO:0007669"/>
    <property type="project" value="UniProtKB-UniRule"/>
</dbReference>
<dbReference type="GO" id="GO:0097216">
    <property type="term" value="F:guanosine tetraphosphate binding"/>
    <property type="evidence" value="ECO:0007669"/>
    <property type="project" value="UniProtKB-ARBA"/>
</dbReference>
<dbReference type="GO" id="GO:0043022">
    <property type="term" value="F:ribosome binding"/>
    <property type="evidence" value="ECO:0007669"/>
    <property type="project" value="UniProtKB-UniRule"/>
</dbReference>
<dbReference type="GO" id="GO:0003746">
    <property type="term" value="F:translation elongation factor activity"/>
    <property type="evidence" value="ECO:0007669"/>
    <property type="project" value="UniProtKB-UniRule"/>
</dbReference>
<dbReference type="GO" id="GO:0045727">
    <property type="term" value="P:positive regulation of translation"/>
    <property type="evidence" value="ECO:0007669"/>
    <property type="project" value="UniProtKB-UniRule"/>
</dbReference>
<dbReference type="CDD" id="cd03699">
    <property type="entry name" value="EF4_II"/>
    <property type="match status" value="1"/>
</dbReference>
<dbReference type="CDD" id="cd16260">
    <property type="entry name" value="EF4_III"/>
    <property type="match status" value="1"/>
</dbReference>
<dbReference type="CDD" id="cd01890">
    <property type="entry name" value="LepA"/>
    <property type="match status" value="1"/>
</dbReference>
<dbReference type="CDD" id="cd03709">
    <property type="entry name" value="lepA_C"/>
    <property type="match status" value="1"/>
</dbReference>
<dbReference type="FunFam" id="3.40.50.300:FF:000078">
    <property type="entry name" value="Elongation factor 4"/>
    <property type="match status" value="1"/>
</dbReference>
<dbReference type="FunFam" id="2.40.30.10:FF:000015">
    <property type="entry name" value="Translation factor GUF1, mitochondrial"/>
    <property type="match status" value="1"/>
</dbReference>
<dbReference type="FunFam" id="3.30.70.240:FF:000007">
    <property type="entry name" value="Translation factor GUF1, mitochondrial"/>
    <property type="match status" value="1"/>
</dbReference>
<dbReference type="FunFam" id="3.30.70.2570:FF:000001">
    <property type="entry name" value="Translation factor GUF1, mitochondrial"/>
    <property type="match status" value="1"/>
</dbReference>
<dbReference type="FunFam" id="3.30.70.870:FF:000004">
    <property type="entry name" value="Translation factor GUF1, mitochondrial"/>
    <property type="match status" value="1"/>
</dbReference>
<dbReference type="Gene3D" id="3.30.70.240">
    <property type="match status" value="1"/>
</dbReference>
<dbReference type="Gene3D" id="3.30.70.2570">
    <property type="entry name" value="Elongation factor 4, C-terminal domain"/>
    <property type="match status" value="1"/>
</dbReference>
<dbReference type="Gene3D" id="3.30.70.870">
    <property type="entry name" value="Elongation Factor G (Translational Gtpase), domain 3"/>
    <property type="match status" value="1"/>
</dbReference>
<dbReference type="Gene3D" id="3.40.50.300">
    <property type="entry name" value="P-loop containing nucleotide triphosphate hydrolases"/>
    <property type="match status" value="1"/>
</dbReference>
<dbReference type="Gene3D" id="2.40.30.10">
    <property type="entry name" value="Translation factors"/>
    <property type="match status" value="1"/>
</dbReference>
<dbReference type="HAMAP" id="MF_00071">
    <property type="entry name" value="LepA"/>
    <property type="match status" value="1"/>
</dbReference>
<dbReference type="InterPro" id="IPR006297">
    <property type="entry name" value="EF-4"/>
</dbReference>
<dbReference type="InterPro" id="IPR035647">
    <property type="entry name" value="EFG_III/V"/>
</dbReference>
<dbReference type="InterPro" id="IPR000640">
    <property type="entry name" value="EFG_V-like"/>
</dbReference>
<dbReference type="InterPro" id="IPR004161">
    <property type="entry name" value="EFTu-like_2"/>
</dbReference>
<dbReference type="InterPro" id="IPR031157">
    <property type="entry name" value="G_TR_CS"/>
</dbReference>
<dbReference type="InterPro" id="IPR038363">
    <property type="entry name" value="LepA_C_sf"/>
</dbReference>
<dbReference type="InterPro" id="IPR013842">
    <property type="entry name" value="LepA_CTD"/>
</dbReference>
<dbReference type="InterPro" id="IPR035654">
    <property type="entry name" value="LepA_IV"/>
</dbReference>
<dbReference type="InterPro" id="IPR027417">
    <property type="entry name" value="P-loop_NTPase"/>
</dbReference>
<dbReference type="InterPro" id="IPR005225">
    <property type="entry name" value="Small_GTP-bd"/>
</dbReference>
<dbReference type="InterPro" id="IPR000795">
    <property type="entry name" value="T_Tr_GTP-bd_dom"/>
</dbReference>
<dbReference type="InterPro" id="IPR009000">
    <property type="entry name" value="Transl_B-barrel_sf"/>
</dbReference>
<dbReference type="NCBIfam" id="TIGR01393">
    <property type="entry name" value="lepA"/>
    <property type="match status" value="1"/>
</dbReference>
<dbReference type="NCBIfam" id="TIGR00231">
    <property type="entry name" value="small_GTP"/>
    <property type="match status" value="1"/>
</dbReference>
<dbReference type="PANTHER" id="PTHR43512:SF4">
    <property type="entry name" value="TRANSLATION FACTOR GUF1 HOMOLOG, CHLOROPLASTIC"/>
    <property type="match status" value="1"/>
</dbReference>
<dbReference type="PANTHER" id="PTHR43512">
    <property type="entry name" value="TRANSLATION FACTOR GUF1-RELATED"/>
    <property type="match status" value="1"/>
</dbReference>
<dbReference type="Pfam" id="PF00679">
    <property type="entry name" value="EFG_C"/>
    <property type="match status" value="1"/>
</dbReference>
<dbReference type="Pfam" id="PF00009">
    <property type="entry name" value="GTP_EFTU"/>
    <property type="match status" value="1"/>
</dbReference>
<dbReference type="Pfam" id="PF03144">
    <property type="entry name" value="GTP_EFTU_D2"/>
    <property type="match status" value="1"/>
</dbReference>
<dbReference type="Pfam" id="PF06421">
    <property type="entry name" value="LepA_C"/>
    <property type="match status" value="1"/>
</dbReference>
<dbReference type="PRINTS" id="PR00315">
    <property type="entry name" value="ELONGATNFCT"/>
</dbReference>
<dbReference type="SMART" id="SM00838">
    <property type="entry name" value="EFG_C"/>
    <property type="match status" value="1"/>
</dbReference>
<dbReference type="SUPFAM" id="SSF54980">
    <property type="entry name" value="EF-G C-terminal domain-like"/>
    <property type="match status" value="2"/>
</dbReference>
<dbReference type="SUPFAM" id="SSF52540">
    <property type="entry name" value="P-loop containing nucleoside triphosphate hydrolases"/>
    <property type="match status" value="1"/>
</dbReference>
<dbReference type="SUPFAM" id="SSF50447">
    <property type="entry name" value="Translation proteins"/>
    <property type="match status" value="1"/>
</dbReference>
<dbReference type="PROSITE" id="PS00301">
    <property type="entry name" value="G_TR_1"/>
    <property type="match status" value="1"/>
</dbReference>
<dbReference type="PROSITE" id="PS51722">
    <property type="entry name" value="G_TR_2"/>
    <property type="match status" value="1"/>
</dbReference>
<proteinExistence type="inferred from homology"/>